<feature type="chain" id="PRO_0000340682" description="Zinc finger protein 726">
    <location>
        <begin position="1"/>
        <end position="616"/>
    </location>
</feature>
<feature type="domain" description="KRAB" evidence="3">
    <location>
        <begin position="4"/>
        <end position="75"/>
    </location>
</feature>
<feature type="zinc finger region" description="C2H2-type 1; degenerate" evidence="2">
    <location>
        <begin position="173"/>
        <end position="195"/>
    </location>
</feature>
<feature type="zinc finger region" description="C2H2-type 2" evidence="2">
    <location>
        <begin position="201"/>
        <end position="223"/>
    </location>
</feature>
<feature type="zinc finger region" description="C2H2-type 3; degenerate" evidence="2">
    <location>
        <begin position="229"/>
        <end position="251"/>
    </location>
</feature>
<feature type="zinc finger region" description="C2H2-type 4" evidence="2">
    <location>
        <begin position="257"/>
        <end position="279"/>
    </location>
</feature>
<feature type="zinc finger region" description="C2H2-type 5" evidence="2">
    <location>
        <begin position="285"/>
        <end position="307"/>
    </location>
</feature>
<feature type="zinc finger region" description="C2H2-type 6" evidence="2">
    <location>
        <begin position="313"/>
        <end position="335"/>
    </location>
</feature>
<feature type="zinc finger region" description="C2H2-type 7" evidence="2">
    <location>
        <begin position="341"/>
        <end position="363"/>
    </location>
</feature>
<feature type="zinc finger region" description="C2H2-type 8" evidence="2">
    <location>
        <begin position="369"/>
        <end position="391"/>
    </location>
</feature>
<feature type="zinc finger region" description="C2H2-type 9" evidence="2">
    <location>
        <begin position="397"/>
        <end position="419"/>
    </location>
</feature>
<feature type="zinc finger region" description="C2H2-type 10" evidence="2">
    <location>
        <begin position="425"/>
        <end position="447"/>
    </location>
</feature>
<feature type="zinc finger region" description="C2H2-type 11" evidence="2">
    <location>
        <begin position="453"/>
        <end position="475"/>
    </location>
</feature>
<feature type="zinc finger region" description="C2H2-type 12" evidence="2">
    <location>
        <begin position="481"/>
        <end position="503"/>
    </location>
</feature>
<feature type="zinc finger region" description="C2H2-type 13" evidence="2">
    <location>
        <begin position="509"/>
        <end position="531"/>
    </location>
</feature>
<feature type="zinc finger region" description="C2H2-type 14" evidence="2">
    <location>
        <begin position="537"/>
        <end position="559"/>
    </location>
</feature>
<feature type="zinc finger region" description="C2H2-type 15" evidence="2">
    <location>
        <begin position="565"/>
        <end position="587"/>
    </location>
</feature>
<feature type="zinc finger region" description="C2H2-type 16" evidence="2">
    <location>
        <begin position="593"/>
        <end position="615"/>
    </location>
</feature>
<feature type="splice variant" id="VSP_061120" description="In isoform 2.">
    <location>
        <begin position="78"/>
        <end position="616"/>
    </location>
</feature>
<feature type="sequence conflict" description="In Ref. 2; AAH46415." evidence="4" ref="2">
    <original>I</original>
    <variation>R</variation>
    <location>
        <position position="77"/>
    </location>
</feature>
<dbReference type="EMBL" id="AC011503">
    <property type="status" value="NOT_ANNOTATED_CDS"/>
    <property type="molecule type" value="Genomic_DNA"/>
</dbReference>
<dbReference type="EMBL" id="BC046415">
    <property type="protein sequence ID" value="AAH46415.2"/>
    <property type="molecule type" value="mRNA"/>
</dbReference>
<dbReference type="CCDS" id="CCDS59372.1">
    <molecule id="A6NNF4-3"/>
</dbReference>
<dbReference type="RefSeq" id="NP_001230967.1">
    <molecule id="A6NNF4-3"/>
    <property type="nucleotide sequence ID" value="NM_001244038.2"/>
</dbReference>
<dbReference type="RefSeq" id="NP_001335618.1">
    <property type="nucleotide sequence ID" value="NM_001348689.1"/>
</dbReference>
<dbReference type="SMR" id="A6NNF4"/>
<dbReference type="BioGRID" id="610475">
    <property type="interactions" value="11"/>
</dbReference>
<dbReference type="FunCoup" id="A6NNF4">
    <property type="interactions" value="1"/>
</dbReference>
<dbReference type="IntAct" id="A6NNF4">
    <property type="interactions" value="9"/>
</dbReference>
<dbReference type="STRING" id="9606.ENSP00000471516"/>
<dbReference type="iPTMnet" id="A6NNF4"/>
<dbReference type="PhosphoSitePlus" id="A6NNF4"/>
<dbReference type="BioMuta" id="ZNF726"/>
<dbReference type="jPOST" id="A6NNF4"/>
<dbReference type="MassIVE" id="A6NNF4"/>
<dbReference type="PaxDb" id="9606-ENSP00000471516"/>
<dbReference type="PeptideAtlas" id="A6NNF4"/>
<dbReference type="ProteomicsDB" id="1606">
    <molecule id="A6NNF4-2"/>
</dbReference>
<dbReference type="Antibodypedia" id="77920">
    <property type="antibodies" value="3 antibodies from 3 providers"/>
</dbReference>
<dbReference type="DNASU" id="730087"/>
<dbReference type="Ensembl" id="ENST00000594466.6">
    <molecule id="A6NNF4-3"/>
    <property type="protein sequence ID" value="ENSP00000471516.1"/>
    <property type="gene ID" value="ENSG00000213967.12"/>
</dbReference>
<dbReference type="GeneID" id="730087"/>
<dbReference type="KEGG" id="hsa:730087"/>
<dbReference type="MANE-Select" id="ENST00000594466.6">
    <property type="protein sequence ID" value="ENSP00000471516.1"/>
    <property type="RefSeq nucleotide sequence ID" value="NM_001244038.2"/>
    <property type="RefSeq protein sequence ID" value="NP_001230967.1"/>
</dbReference>
<dbReference type="UCSC" id="uc021urw.2">
    <molecule id="A6NNF4-3"/>
    <property type="organism name" value="human"/>
</dbReference>
<dbReference type="AGR" id="HGNC:32462"/>
<dbReference type="CTD" id="730087"/>
<dbReference type="DisGeNET" id="730087"/>
<dbReference type="GeneCards" id="ZNF726"/>
<dbReference type="HGNC" id="HGNC:32462">
    <property type="gene designation" value="ZNF726"/>
</dbReference>
<dbReference type="HPA" id="ENSG00000213967">
    <property type="expression patterns" value="Low tissue specificity"/>
</dbReference>
<dbReference type="neXtProt" id="NX_A6NNF4"/>
<dbReference type="OpenTargets" id="ENSG00000213967"/>
<dbReference type="VEuPathDB" id="HostDB:ENSG00000213967"/>
<dbReference type="eggNOG" id="KOG1721">
    <property type="taxonomic scope" value="Eukaryota"/>
</dbReference>
<dbReference type="GeneTree" id="ENSGT00940000153236"/>
<dbReference type="HOGENOM" id="CLU_002678_69_11_1"/>
<dbReference type="InParanoid" id="A6NNF4"/>
<dbReference type="OMA" id="CKCEERG"/>
<dbReference type="OrthoDB" id="9411774at2759"/>
<dbReference type="PAN-GO" id="A6NNF4">
    <property type="GO annotations" value="4 GO annotations based on evolutionary models"/>
</dbReference>
<dbReference type="PathwayCommons" id="A6NNF4"/>
<dbReference type="Reactome" id="R-HSA-212436">
    <property type="pathway name" value="Generic Transcription Pathway"/>
</dbReference>
<dbReference type="SignaLink" id="A6NNF4"/>
<dbReference type="BioGRID-ORCS" id="730087">
    <property type="hits" value="9 hits in 1163 CRISPR screens"/>
</dbReference>
<dbReference type="ChiTaRS" id="ZNF726">
    <property type="organism name" value="human"/>
</dbReference>
<dbReference type="GenomeRNAi" id="730087"/>
<dbReference type="Pharos" id="A6NNF4">
    <property type="development level" value="Tdark"/>
</dbReference>
<dbReference type="PRO" id="PR:A6NNF4"/>
<dbReference type="Proteomes" id="UP000005640">
    <property type="component" value="Chromosome 19"/>
</dbReference>
<dbReference type="RNAct" id="A6NNF4">
    <property type="molecule type" value="protein"/>
</dbReference>
<dbReference type="Bgee" id="ENSG00000213967">
    <property type="expression patterns" value="Expressed in male germ line stem cell (sensu Vertebrata) in testis and 97 other cell types or tissues"/>
</dbReference>
<dbReference type="ExpressionAtlas" id="A6NNF4">
    <property type="expression patterns" value="baseline and differential"/>
</dbReference>
<dbReference type="GO" id="GO:0005634">
    <property type="term" value="C:nucleus"/>
    <property type="evidence" value="ECO:0007669"/>
    <property type="project" value="UniProtKB-SubCell"/>
</dbReference>
<dbReference type="GO" id="GO:0003677">
    <property type="term" value="F:DNA binding"/>
    <property type="evidence" value="ECO:0007669"/>
    <property type="project" value="UniProtKB-KW"/>
</dbReference>
<dbReference type="GO" id="GO:0008270">
    <property type="term" value="F:zinc ion binding"/>
    <property type="evidence" value="ECO:0007669"/>
    <property type="project" value="UniProtKB-KW"/>
</dbReference>
<dbReference type="GO" id="GO:0006355">
    <property type="term" value="P:regulation of DNA-templated transcription"/>
    <property type="evidence" value="ECO:0007669"/>
    <property type="project" value="InterPro"/>
</dbReference>
<dbReference type="CDD" id="cd07765">
    <property type="entry name" value="KRAB_A-box"/>
    <property type="match status" value="1"/>
</dbReference>
<dbReference type="FunFam" id="3.30.160.60:FF:003915">
    <property type="match status" value="1"/>
</dbReference>
<dbReference type="FunFam" id="3.30.160.60:FF:001158">
    <property type="entry name" value="zinc finger protein 22"/>
    <property type="match status" value="1"/>
</dbReference>
<dbReference type="FunFam" id="3.30.160.60:FF:000034">
    <property type="entry name" value="zinc finger protein 25"/>
    <property type="match status" value="4"/>
</dbReference>
<dbReference type="FunFam" id="3.30.160.60:FF:001868">
    <property type="entry name" value="Zinc finger protein 264"/>
    <property type="match status" value="1"/>
</dbReference>
<dbReference type="FunFam" id="3.30.160.60:FF:000120">
    <property type="entry name" value="Zinc finger protein 430"/>
    <property type="match status" value="4"/>
</dbReference>
<dbReference type="FunFam" id="3.30.160.60:FF:002254">
    <property type="entry name" value="Zinc finger protein 540"/>
    <property type="match status" value="2"/>
</dbReference>
<dbReference type="FunFam" id="3.30.160.60:FF:000362">
    <property type="entry name" value="Zinc finger protein 606"/>
    <property type="match status" value="1"/>
</dbReference>
<dbReference type="FunFam" id="3.30.160.60:FF:002679">
    <property type="entry name" value="Zinc finger protein 726"/>
    <property type="match status" value="1"/>
</dbReference>
<dbReference type="Gene3D" id="6.10.140.140">
    <property type="match status" value="1"/>
</dbReference>
<dbReference type="Gene3D" id="3.30.160.60">
    <property type="entry name" value="Classic Zinc Finger"/>
    <property type="match status" value="16"/>
</dbReference>
<dbReference type="InterPro" id="IPR001909">
    <property type="entry name" value="KRAB"/>
</dbReference>
<dbReference type="InterPro" id="IPR036051">
    <property type="entry name" value="KRAB_dom_sf"/>
</dbReference>
<dbReference type="InterPro" id="IPR050826">
    <property type="entry name" value="Krueppel_C2H2_ZnFinger"/>
</dbReference>
<dbReference type="InterPro" id="IPR036236">
    <property type="entry name" value="Znf_C2H2_sf"/>
</dbReference>
<dbReference type="InterPro" id="IPR013087">
    <property type="entry name" value="Znf_C2H2_type"/>
</dbReference>
<dbReference type="PANTHER" id="PTHR24377">
    <property type="entry name" value="IP01015P-RELATED"/>
    <property type="match status" value="1"/>
</dbReference>
<dbReference type="Pfam" id="PF01352">
    <property type="entry name" value="KRAB"/>
    <property type="match status" value="1"/>
</dbReference>
<dbReference type="Pfam" id="PF00096">
    <property type="entry name" value="zf-C2H2"/>
    <property type="match status" value="14"/>
</dbReference>
<dbReference type="SMART" id="SM00349">
    <property type="entry name" value="KRAB"/>
    <property type="match status" value="1"/>
</dbReference>
<dbReference type="SMART" id="SM00355">
    <property type="entry name" value="ZnF_C2H2"/>
    <property type="match status" value="15"/>
</dbReference>
<dbReference type="SUPFAM" id="SSF57667">
    <property type="entry name" value="beta-beta-alpha zinc fingers"/>
    <property type="match status" value="9"/>
</dbReference>
<dbReference type="SUPFAM" id="SSF109640">
    <property type="entry name" value="KRAB domain (Kruppel-associated box)"/>
    <property type="match status" value="1"/>
</dbReference>
<dbReference type="PROSITE" id="PS50805">
    <property type="entry name" value="KRAB"/>
    <property type="match status" value="1"/>
</dbReference>
<dbReference type="PROSITE" id="PS00028">
    <property type="entry name" value="ZINC_FINGER_C2H2_1"/>
    <property type="match status" value="14"/>
</dbReference>
<dbReference type="PROSITE" id="PS50157">
    <property type="entry name" value="ZINC_FINGER_C2H2_2"/>
    <property type="match status" value="16"/>
</dbReference>
<name>ZN726_HUMAN</name>
<comment type="function">
    <text evidence="1">May be involved in transcriptional regulation.</text>
</comment>
<comment type="interaction">
    <interactant intactId="EBI-18338284">
        <id>A6NNF4-2</id>
    </interactant>
    <interactant intactId="EBI-359873">
        <id>Q9UHV9</id>
        <label>PFDN2</label>
    </interactant>
    <organismsDiffer>false</organismsDiffer>
    <experiments>3</experiments>
</comment>
<comment type="subcellular location">
    <subcellularLocation>
        <location evidence="1">Nucleus</location>
    </subcellularLocation>
</comment>
<comment type="alternative products">
    <event type="alternative splicing"/>
    <isoform>
        <id>A6NNF4-3</id>
        <name>3</name>
        <sequence type="displayed"/>
    </isoform>
    <isoform>
        <id>A6NNF4-2</id>
        <name>2</name>
        <sequence type="described" ref="VSP_061120"/>
    </isoform>
</comment>
<comment type="similarity">
    <text evidence="4">Belongs to the krueppel C2H2-type zinc-finger protein family.</text>
</comment>
<reference key="1">
    <citation type="journal article" date="2004" name="Nature">
        <title>The DNA sequence and biology of human chromosome 19.</title>
        <authorList>
            <person name="Grimwood J."/>
            <person name="Gordon L.A."/>
            <person name="Olsen A.S."/>
            <person name="Terry A."/>
            <person name="Schmutz J."/>
            <person name="Lamerdin J.E."/>
            <person name="Hellsten U."/>
            <person name="Goodstein D."/>
            <person name="Couronne O."/>
            <person name="Tran-Gyamfi M."/>
            <person name="Aerts A."/>
            <person name="Altherr M."/>
            <person name="Ashworth L."/>
            <person name="Bajorek E."/>
            <person name="Black S."/>
            <person name="Branscomb E."/>
            <person name="Caenepeel S."/>
            <person name="Carrano A.V."/>
            <person name="Caoile C."/>
            <person name="Chan Y.M."/>
            <person name="Christensen M."/>
            <person name="Cleland C.A."/>
            <person name="Copeland A."/>
            <person name="Dalin E."/>
            <person name="Dehal P."/>
            <person name="Denys M."/>
            <person name="Detter J.C."/>
            <person name="Escobar J."/>
            <person name="Flowers D."/>
            <person name="Fotopulos D."/>
            <person name="Garcia C."/>
            <person name="Georgescu A.M."/>
            <person name="Glavina T."/>
            <person name="Gomez M."/>
            <person name="Gonzales E."/>
            <person name="Groza M."/>
            <person name="Hammon N."/>
            <person name="Hawkins T."/>
            <person name="Haydu L."/>
            <person name="Ho I."/>
            <person name="Huang W."/>
            <person name="Israni S."/>
            <person name="Jett J."/>
            <person name="Kadner K."/>
            <person name="Kimball H."/>
            <person name="Kobayashi A."/>
            <person name="Larionov V."/>
            <person name="Leem S.-H."/>
            <person name="Lopez F."/>
            <person name="Lou Y."/>
            <person name="Lowry S."/>
            <person name="Malfatti S."/>
            <person name="Martinez D."/>
            <person name="McCready P.M."/>
            <person name="Medina C."/>
            <person name="Morgan J."/>
            <person name="Nelson K."/>
            <person name="Nolan M."/>
            <person name="Ovcharenko I."/>
            <person name="Pitluck S."/>
            <person name="Pollard M."/>
            <person name="Popkie A.P."/>
            <person name="Predki P."/>
            <person name="Quan G."/>
            <person name="Ramirez L."/>
            <person name="Rash S."/>
            <person name="Retterer J."/>
            <person name="Rodriguez A."/>
            <person name="Rogers S."/>
            <person name="Salamov A."/>
            <person name="Salazar A."/>
            <person name="She X."/>
            <person name="Smith D."/>
            <person name="Slezak T."/>
            <person name="Solovyev V."/>
            <person name="Thayer N."/>
            <person name="Tice H."/>
            <person name="Tsai M."/>
            <person name="Ustaszewska A."/>
            <person name="Vo N."/>
            <person name="Wagner M."/>
            <person name="Wheeler J."/>
            <person name="Wu K."/>
            <person name="Xie G."/>
            <person name="Yang J."/>
            <person name="Dubchak I."/>
            <person name="Furey T.S."/>
            <person name="DeJong P."/>
            <person name="Dickson M."/>
            <person name="Gordon D."/>
            <person name="Eichler E.E."/>
            <person name="Pennacchio L.A."/>
            <person name="Richardson P."/>
            <person name="Stubbs L."/>
            <person name="Rokhsar D.S."/>
            <person name="Myers R.M."/>
            <person name="Rubin E.M."/>
            <person name="Lucas S.M."/>
        </authorList>
    </citation>
    <scope>NUCLEOTIDE SEQUENCE [LARGE SCALE GENOMIC DNA]</scope>
</reference>
<reference key="2">
    <citation type="journal article" date="2004" name="Genome Res.">
        <title>The status, quality, and expansion of the NIH full-length cDNA project: the Mammalian Gene Collection (MGC).</title>
        <authorList>
            <consortium name="The MGC Project Team"/>
        </authorList>
    </citation>
    <scope>NUCLEOTIDE SEQUENCE [LARGE SCALE MRNA] (ISOFORM 2)</scope>
    <source>
        <tissue>Testis</tissue>
    </source>
</reference>
<proteinExistence type="evidence at protein level"/>
<keyword id="KW-0025">Alternative splicing</keyword>
<keyword id="KW-0238">DNA-binding</keyword>
<keyword id="KW-0479">Metal-binding</keyword>
<keyword id="KW-0539">Nucleus</keyword>
<keyword id="KW-1267">Proteomics identification</keyword>
<keyword id="KW-1185">Reference proteome</keyword>
<keyword id="KW-0677">Repeat</keyword>
<keyword id="KW-0804">Transcription</keyword>
<keyword id="KW-0805">Transcription regulation</keyword>
<keyword id="KW-0862">Zinc</keyword>
<keyword id="KW-0863">Zinc-finger</keyword>
<organism>
    <name type="scientific">Homo sapiens</name>
    <name type="common">Human</name>
    <dbReference type="NCBI Taxonomy" id="9606"/>
    <lineage>
        <taxon>Eukaryota</taxon>
        <taxon>Metazoa</taxon>
        <taxon>Chordata</taxon>
        <taxon>Craniata</taxon>
        <taxon>Vertebrata</taxon>
        <taxon>Euteleostomi</taxon>
        <taxon>Mammalia</taxon>
        <taxon>Eutheria</taxon>
        <taxon>Euarchontoglires</taxon>
        <taxon>Primates</taxon>
        <taxon>Haplorrhini</taxon>
        <taxon>Catarrhini</taxon>
        <taxon>Hominidae</taxon>
        <taxon>Homo</taxon>
    </lineage>
</organism>
<accession>A6NNF4</accession>
<accession>M0R0X8</accession>
<accession>Q86Y87</accession>
<gene>
    <name evidence="5" type="primary">ZNF726</name>
</gene>
<sequence length="616" mass="71359">MGLLTFRDVAIEFSLEEWQCLDTAQKNLYRNVMLENYRNLAFLGIAVSKPDLIICLEKEKEPWNMKRDEMVDEPPGICPHFAQDIWPEQGVEDSFQKVILRRFEKCGHENLQLRKGCKSVDECKVHKEGYNGLNQCFTTTQGKASQCGKYLKVFYKFINLNRYKIRHTRKKPFKCKNCVKSFCMFSHKTQHKSIYTTEKSYKCKECGKTFNWSSTLTNHKKTHTEEKPYKCEEYGKAFNQSSNYTTHKVTHTGEKPYKCEECGKAFSQSSTLTIHKRIHTGEKPCKCEECGKAFSQPSALTIHKRMHIGEKPYKCEECGKAFVWSSTLTRHKRLHSGEKPYKCEECAKAFSQFGHLTTHRIIHTGEKPYKCEECGKAFIWPSTLTKHKRIHTGEKPYKCEECGKAFHRSSNLTKHKIIHTGEKPYKCEECGKAFIWSSNLTEHKKIHTREKPYKCEECSKAFSRSSALTTHKRMHTGEKPYKCEECGKAFSQSSTLTAHKIIHTGEKPYKCEECGKAFILSSTLSKHKRIHTGEKPYKCEECGKTFNQSSNLSTHKIIHTGEKPYKCEECGKAFNRSSNLSTHKIIHTGEKPYKCDECGKSFIWSSTLFKHKRIHT</sequence>
<evidence type="ECO:0000250" key="1"/>
<evidence type="ECO:0000255" key="2">
    <source>
        <dbReference type="PROSITE-ProRule" id="PRU00042"/>
    </source>
</evidence>
<evidence type="ECO:0000255" key="3">
    <source>
        <dbReference type="PROSITE-ProRule" id="PRU00119"/>
    </source>
</evidence>
<evidence type="ECO:0000305" key="4"/>
<evidence type="ECO:0000312" key="5">
    <source>
        <dbReference type="HGNC" id="HGNC:32462"/>
    </source>
</evidence>
<protein>
    <recommendedName>
        <fullName evidence="4">Zinc finger protein 726</fullName>
    </recommendedName>
</protein>